<protein>
    <recommendedName>
        <fullName>Eukaryotic translation initiation factor 3 subunit B</fullName>
        <shortName>eIF3b</shortName>
    </recommendedName>
    <alternativeName>
        <fullName>Eukaryotic translation initiation factor 3 90 kDa subunit homolog</fullName>
        <shortName>eIF3 p90</shortName>
    </alternativeName>
    <alternativeName>
        <fullName>Translation initiation factor eIF3 p90 subunit homolog</fullName>
    </alternativeName>
</protein>
<gene>
    <name type="primary">TIF32</name>
    <name type="synonym">PRT1</name>
</gene>
<dbReference type="EMBL" id="X15111">
    <property type="protein sequence ID" value="CAA33208.1"/>
    <property type="molecule type" value="Genomic_DNA"/>
</dbReference>
<dbReference type="PIR" id="S16511">
    <property type="entry name" value="S16511"/>
</dbReference>
<dbReference type="SMR" id="P12806"/>
<dbReference type="GO" id="GO:0005852">
    <property type="term" value="C:eukaryotic translation initiation factor 3 complex"/>
    <property type="evidence" value="ECO:0007669"/>
    <property type="project" value="InterPro"/>
</dbReference>
<dbReference type="GO" id="GO:0003723">
    <property type="term" value="F:RNA binding"/>
    <property type="evidence" value="ECO:0007669"/>
    <property type="project" value="UniProtKB-KW"/>
</dbReference>
<dbReference type="GO" id="GO:0003743">
    <property type="term" value="F:translation initiation factor activity"/>
    <property type="evidence" value="ECO:0007669"/>
    <property type="project" value="UniProtKB-KW"/>
</dbReference>
<dbReference type="GO" id="GO:0031369">
    <property type="term" value="F:translation initiation factor binding"/>
    <property type="evidence" value="ECO:0007669"/>
    <property type="project" value="InterPro"/>
</dbReference>
<dbReference type="CDD" id="cd12278">
    <property type="entry name" value="RRM_eIF3B"/>
    <property type="match status" value="1"/>
</dbReference>
<dbReference type="Gene3D" id="3.30.70.330">
    <property type="match status" value="1"/>
</dbReference>
<dbReference type="InterPro" id="IPR011400">
    <property type="entry name" value="EIF3B"/>
</dbReference>
<dbReference type="InterPro" id="IPR034363">
    <property type="entry name" value="eIF3B_RRM"/>
</dbReference>
<dbReference type="InterPro" id="IPR012677">
    <property type="entry name" value="Nucleotide-bd_a/b_plait_sf"/>
</dbReference>
<dbReference type="InterPro" id="IPR035979">
    <property type="entry name" value="RBD_domain_sf"/>
</dbReference>
<dbReference type="InterPro" id="IPR000504">
    <property type="entry name" value="RRM_dom"/>
</dbReference>
<dbReference type="PANTHER" id="PTHR14068">
    <property type="entry name" value="EUKARYOTIC TRANSLATION INITIATION FACTOR 3 EIF3 -RELATED"/>
    <property type="match status" value="1"/>
</dbReference>
<dbReference type="PANTHER" id="PTHR14068:SF0">
    <property type="entry name" value="EUKARYOTIC TRANSLATION INITIATION FACTOR 3 SUBUNIT B"/>
    <property type="match status" value="1"/>
</dbReference>
<dbReference type="Pfam" id="PF00076">
    <property type="entry name" value="RRM_1"/>
    <property type="match status" value="1"/>
</dbReference>
<dbReference type="SMART" id="SM00360">
    <property type="entry name" value="RRM"/>
    <property type="match status" value="1"/>
</dbReference>
<dbReference type="SUPFAM" id="SSF54928">
    <property type="entry name" value="RNA-binding domain, RBD"/>
    <property type="match status" value="1"/>
</dbReference>
<dbReference type="PROSITE" id="PS50102">
    <property type="entry name" value="RRM"/>
    <property type="match status" value="1"/>
</dbReference>
<name>EIF3B_PICAN</name>
<keyword id="KW-0963">Cytoplasm</keyword>
<keyword id="KW-0396">Initiation factor</keyword>
<keyword id="KW-0648">Protein biosynthesis</keyword>
<keyword id="KW-0694">RNA-binding</keyword>
<reference key="1">
    <citation type="journal article" date="1989" name="Biochim. Biophys. Acta">
        <title>Cloning and sequencing of the peroxisomal amine oxidase gene from Hansenula polymorpha.</title>
        <authorList>
            <person name="Bruinenberg P.G."/>
            <person name="Evers M."/>
            <person name="Waterham H.R."/>
            <person name="Kuipers J."/>
            <person name="Arnberg A.C."/>
            <person name="Ab G."/>
        </authorList>
    </citation>
    <scope>NUCLEOTIDE SEQUENCE [GENOMIC DNA]</scope>
    <source>
        <strain>ATCC 34438 / CBS 4732 / DSM 70277 / JCM 3621 / NBRC 1476 / NRRL Y-5445</strain>
    </source>
</reference>
<comment type="function">
    <text evidence="2">RNA-binding component of the eukaryotic translation initiation factor 3 (eIF-3) complex, which is involved in protein synthesis of a specialized repertoire of mRNAs and, together with other initiation factors, stimulates binding of mRNA and methionyl-tRNAi to the 40S ribosome. The eIF-3 complex specifically targets and initiates translation of a subset of mRNAs involved in cell proliferation.</text>
</comment>
<comment type="subunit">
    <text evidence="2">Component of the eukaryotic translation initiation factor 3 (eIF-3) complex.</text>
</comment>
<comment type="subcellular location">
    <subcellularLocation>
        <location evidence="2">Cytoplasm</location>
    </subcellularLocation>
</comment>
<comment type="similarity">
    <text evidence="4">Belongs to the eIF-3 subunit B family.</text>
</comment>
<organism>
    <name type="scientific">Pichia angusta</name>
    <name type="common">Yeast</name>
    <name type="synonym">Hansenula polymorpha</name>
    <dbReference type="NCBI Taxonomy" id="870730"/>
    <lineage>
        <taxon>Eukaryota</taxon>
        <taxon>Fungi</taxon>
        <taxon>Dikarya</taxon>
        <taxon>Ascomycota</taxon>
        <taxon>Saccharomycotina</taxon>
        <taxon>Pichiomycetes</taxon>
        <taxon>Pichiales</taxon>
        <taxon>Pichiaceae</taxon>
        <taxon>Ogataea</taxon>
    </lineage>
</organism>
<feature type="chain" id="PRO_0000123536" description="Eukaryotic translation initiation factor 3 subunit B">
    <location>
        <begin position="1"/>
        <end position="220"/>
    </location>
</feature>
<feature type="domain" description="RRM" evidence="3">
    <location>
        <begin position="37"/>
        <end position="120"/>
    </location>
</feature>
<feature type="region of interest" description="Sufficient for interaction with PIC8" evidence="1">
    <location>
        <begin position="1"/>
        <end position="220"/>
    </location>
</feature>
<feature type="region of interest" description="Sufficient for interaction with HCR1 and TIF32" evidence="1">
    <location>
        <begin position="1"/>
        <end position="94"/>
    </location>
</feature>
<feature type="non-terminal residue">
    <location>
        <position position="220"/>
    </location>
</feature>
<sequence>MPEPIAFDESQVDISSIDFSDLEAKYHVPEPEHSYEHFVICDGAPIAPEAKAPVLKKVLTKLFSQCGKVVDMFMPLENGQTKGFLIIELDSAAAADKAVKQLNGKKLDVKHRLAVNKLPDMEKYALNDNISEEFREPAIPEFRSHGYLKSWLLDPNGREQFMLHHHDTVGVYWYKKNIQPEEVIEPRAHWTSASMKFSPKGTYLFSFFPGGVQAWGGERI</sequence>
<evidence type="ECO:0000250" key="1"/>
<evidence type="ECO:0000250" key="2">
    <source>
        <dbReference type="UniProtKB" id="P55884"/>
    </source>
</evidence>
<evidence type="ECO:0000255" key="3">
    <source>
        <dbReference type="PROSITE-ProRule" id="PRU00176"/>
    </source>
</evidence>
<evidence type="ECO:0000305" key="4"/>
<proteinExistence type="inferred from homology"/>
<accession>P12806</accession>